<dbReference type="EC" id="2.1.1.179"/>
<dbReference type="EMBL" id="AB103506">
    <property type="protein sequence ID" value="BAC81971.1"/>
    <property type="molecule type" value="Genomic_DNA"/>
</dbReference>
<dbReference type="RefSeq" id="WP_012372818.1">
    <property type="nucleotide sequence ID" value="NG_048058.1"/>
</dbReference>
<dbReference type="SMR" id="Q76G15"/>
<dbReference type="CARD" id="ARO:3000860">
    <property type="molecule name" value="rmtB"/>
    <property type="mechanism identifier" value="ARO:0001001"/>
    <property type="mechanism name" value="antibiotic target alteration"/>
</dbReference>
<dbReference type="KEGG" id="ag:BAC81971"/>
<dbReference type="BRENDA" id="2.1.1.179">
    <property type="organism ID" value="5690"/>
</dbReference>
<dbReference type="GO" id="GO:0008649">
    <property type="term" value="F:rRNA methyltransferase activity"/>
    <property type="evidence" value="ECO:0007669"/>
    <property type="project" value="InterPro"/>
</dbReference>
<dbReference type="GO" id="GO:0046677">
    <property type="term" value="P:response to antibiotic"/>
    <property type="evidence" value="ECO:0007669"/>
    <property type="project" value="UniProtKB-KW"/>
</dbReference>
<dbReference type="Gene3D" id="1.10.8.10">
    <property type="entry name" value="DNA helicase RuvA subunit, C-terminal domain"/>
    <property type="match status" value="1"/>
</dbReference>
<dbReference type="Gene3D" id="3.40.50.150">
    <property type="entry name" value="Vaccinia Virus protein VP39"/>
    <property type="match status" value="1"/>
</dbReference>
<dbReference type="InterPro" id="IPR025981">
    <property type="entry name" value="rRNA_MeTrfase"/>
</dbReference>
<dbReference type="InterPro" id="IPR010769">
    <property type="entry name" value="rRNA_MeTrfase_GmN_bac"/>
</dbReference>
<dbReference type="InterPro" id="IPR029063">
    <property type="entry name" value="SAM-dependent_MTases_sf"/>
</dbReference>
<dbReference type="NCBIfam" id="NF033209">
    <property type="entry name" value="16S_rRNA_Rmt_B"/>
    <property type="match status" value="1"/>
</dbReference>
<dbReference type="NCBIfam" id="NF000466">
    <property type="entry name" value="16S_rRNA_Rmt_gen"/>
    <property type="match status" value="1"/>
</dbReference>
<dbReference type="Pfam" id="PF07091">
    <property type="entry name" value="FmrO"/>
    <property type="match status" value="1"/>
</dbReference>
<dbReference type="PIRSF" id="PIRSF015852">
    <property type="entry name" value="RRNA_mtase_Grm"/>
    <property type="match status" value="1"/>
</dbReference>
<dbReference type="SUPFAM" id="SSF53335">
    <property type="entry name" value="S-adenosyl-L-methionine-dependent methyltransferases"/>
    <property type="match status" value="1"/>
</dbReference>
<reference key="1">
    <citation type="journal article" date="2004" name="Antimicrob. Agents Chemother.">
        <title>Plasmid-mediated 16S rRNA methylase in Serratia marcescens conferring high-level resistance to aminoglycosides.</title>
        <authorList>
            <person name="Doi Y."/>
            <person name="Yokoyama K."/>
            <person name="Yamane K."/>
            <person name="Wachino J."/>
            <person name="Shibata N."/>
            <person name="Yagi T."/>
            <person name="Shibayama K."/>
            <person name="Kato H."/>
            <person name="Arakawa Y."/>
        </authorList>
    </citation>
    <scope>NUCLEOTIDE SEQUENCE [GENOMIC DNA]</scope>
    <scope>FUNCTION AS A METHYLTRANSFERASE AND IN ANTIBIOTIC RESISTANCE</scope>
    <source>
        <strain>S-95</strain>
        <plasmid>pKRC</plasmid>
    </source>
</reference>
<sequence>MNINDALTSILASKKYRALCPDTVRRILTEEWGRHKSPKQTVEAARTRLHGICGAYVTPESLKAAAAALSAGDVKKALSLHASTKERLAELDTLYDFIFSAETPRRVLDIACGLNPLALYERGIASVWGCDIHQGLGDVITPFAREKDWDFTFALQDVLCAPPAEAGDLALIFKLLPLLEREQAGSAMALLQSLNTPRMAVSFPTRSLGGRGKGMEANYAAWFEGGLPAEFEIEDKKTIGTELIYLIKKNG</sequence>
<evidence type="ECO:0000250" key="1"/>
<evidence type="ECO:0000269" key="2">
    <source>
    </source>
</evidence>
<evidence type="ECO:0000305" key="3"/>
<gene>
    <name type="primary">rmtB</name>
</gene>
<geneLocation type="plasmid">
    <name>pKRC</name>
</geneLocation>
<protein>
    <recommendedName>
        <fullName>16S rRNA (guanine(1405)-N(7))-methyltransferase</fullName>
        <ecNumber>2.1.1.179</ecNumber>
    </recommendedName>
    <alternativeName>
        <fullName>16S rRNA m7G1405 methyltransferase</fullName>
    </alternativeName>
</protein>
<accession>Q76G15</accession>
<proteinExistence type="evidence at protein level"/>
<keyword id="KW-0046">Antibiotic resistance</keyword>
<keyword id="KW-0489">Methyltransferase</keyword>
<keyword id="KW-0614">Plasmid</keyword>
<keyword id="KW-0698">rRNA processing</keyword>
<keyword id="KW-0949">S-adenosyl-L-methionine</keyword>
<keyword id="KW-0808">Transferase</keyword>
<comment type="function">
    <text evidence="1 2">Specifically methylates the N(7) position of guanine 1405 in 16S rRNA (By similarity). Confers resistance to various aminoglycosides, including kanamycin, tobramycin, amikacin, arbekacin, gentamicin, sisomicin and isepamicin.</text>
</comment>
<comment type="catalytic activity">
    <reaction>
        <text>guanosine(1405) in 16S rRNA + S-adenosyl-L-methionine = N(7)-methylguanosine(1405) in 16S rRNA + S-adenosyl-L-homocysteine</text>
        <dbReference type="Rhea" id="RHEA:42772"/>
        <dbReference type="Rhea" id="RHEA-COMP:10225"/>
        <dbReference type="Rhea" id="RHEA-COMP:10226"/>
        <dbReference type="ChEBI" id="CHEBI:57856"/>
        <dbReference type="ChEBI" id="CHEBI:59789"/>
        <dbReference type="ChEBI" id="CHEBI:74269"/>
        <dbReference type="ChEBI" id="CHEBI:74480"/>
        <dbReference type="EC" id="2.1.1.179"/>
    </reaction>
</comment>
<comment type="similarity">
    <text evidence="3">Belongs to the methyltransferase superfamily. Aminoglycoside resistance family.</text>
</comment>
<feature type="chain" id="PRO_0000416818" description="16S rRNA (guanine(1405)-N(7))-methyltransferase">
    <location>
        <begin position="1"/>
        <end position="251"/>
    </location>
</feature>
<feature type="binding site" evidence="1">
    <location>
        <position position="56"/>
    </location>
    <ligand>
        <name>S-adenosyl-L-methionine</name>
        <dbReference type="ChEBI" id="CHEBI:59789"/>
    </ligand>
</feature>
<feature type="binding site" evidence="1">
    <location>
        <begin position="81"/>
        <end position="83"/>
    </location>
    <ligand>
        <name>S-adenosyl-L-methionine</name>
        <dbReference type="ChEBI" id="CHEBI:59789"/>
    </ligand>
</feature>
<feature type="binding site" evidence="1">
    <location>
        <position position="87"/>
    </location>
    <ligand>
        <name>S-adenosyl-L-methionine</name>
        <dbReference type="ChEBI" id="CHEBI:59789"/>
    </ligand>
</feature>
<feature type="binding site" evidence="1">
    <location>
        <position position="111"/>
    </location>
    <ligand>
        <name>S-adenosyl-L-methionine</name>
        <dbReference type="ChEBI" id="CHEBI:59789"/>
    </ligand>
</feature>
<feature type="binding site" evidence="1">
    <location>
        <position position="131"/>
    </location>
    <ligand>
        <name>S-adenosyl-L-methionine</name>
        <dbReference type="ChEBI" id="CHEBI:59789"/>
    </ligand>
</feature>
<feature type="binding site" evidence="1">
    <location>
        <begin position="157"/>
        <end position="158"/>
    </location>
    <ligand>
        <name>S-adenosyl-L-methionine</name>
        <dbReference type="ChEBI" id="CHEBI:59789"/>
    </ligand>
</feature>
<feature type="binding site" evidence="1">
    <location>
        <position position="173"/>
    </location>
    <ligand>
        <name>S-adenosyl-L-methionine</name>
        <dbReference type="ChEBI" id="CHEBI:59789"/>
    </ligand>
</feature>
<feature type="binding site" evidence="1">
    <location>
        <position position="182"/>
    </location>
    <ligand>
        <name>S-adenosyl-L-methionine</name>
        <dbReference type="ChEBI" id="CHEBI:59789"/>
    </ligand>
</feature>
<name>RMTB_SERMA</name>
<organism>
    <name type="scientific">Serratia marcescens</name>
    <dbReference type="NCBI Taxonomy" id="615"/>
    <lineage>
        <taxon>Bacteria</taxon>
        <taxon>Pseudomonadati</taxon>
        <taxon>Pseudomonadota</taxon>
        <taxon>Gammaproteobacteria</taxon>
        <taxon>Enterobacterales</taxon>
        <taxon>Yersiniaceae</taxon>
        <taxon>Serratia</taxon>
    </lineage>
</organism>